<comment type="subcellular location">
    <subcellularLocation>
        <location evidence="1">Virion</location>
    </subcellularLocation>
</comment>
<evidence type="ECO:0000305" key="1"/>
<name>CAPSD_GVAIS</name>
<feature type="chain" id="PRO_0000401086" description="Capsid protein">
    <location>
        <begin position="1"/>
        <end position="198"/>
    </location>
</feature>
<organismHost>
    <name type="scientific">Vitis vinifera</name>
    <name type="common">Grape</name>
    <dbReference type="NCBI Taxonomy" id="29760"/>
</organismHost>
<keyword id="KW-0167">Capsid protein</keyword>
<keyword id="KW-1139">Helical capsid protein</keyword>
<keyword id="KW-1185">Reference proteome</keyword>
<keyword id="KW-0946">Virion</keyword>
<organism>
    <name type="scientific">Grapevine virus A (isolate Is 151)</name>
    <name type="common">GVA</name>
    <dbReference type="NCBI Taxonomy" id="651358"/>
    <lineage>
        <taxon>Viruses</taxon>
        <taxon>Riboviria</taxon>
        <taxon>Orthornavirae</taxon>
        <taxon>Kitrinoviricota</taxon>
        <taxon>Alsuviricetes</taxon>
        <taxon>Tymovirales</taxon>
        <taxon>Betaflexiviridae</taxon>
        <taxon>Trivirinae</taxon>
        <taxon>Vitivirus</taxon>
        <taxon>Grapevine virus A</taxon>
    </lineage>
</organism>
<reference key="1">
    <citation type="submission" date="2006-02" db="EMBL/GenBank/DDBJ databases">
        <authorList>
            <person name="Minafra A."/>
        </authorList>
    </citation>
    <scope>NUCLEOTIDE SEQUENCE [GENOMIC RNA]</scope>
</reference>
<protein>
    <recommendedName>
        <fullName>Capsid protein</fullName>
        <shortName>CP</shortName>
    </recommendedName>
    <alternativeName>
        <fullName>Coat protein</fullName>
    </alternativeName>
</protein>
<dbReference type="EMBL" id="X75433">
    <property type="protein sequence ID" value="CAA53185.1"/>
    <property type="molecule type" value="Genomic_RNA"/>
</dbReference>
<dbReference type="PIR" id="S44998">
    <property type="entry name" value="S44998"/>
</dbReference>
<dbReference type="RefSeq" id="NP_619665.1">
    <property type="nucleotide sequence ID" value="NC_003604.2"/>
</dbReference>
<dbReference type="GeneID" id="940187"/>
<dbReference type="KEGG" id="vg:940187"/>
<dbReference type="Proteomes" id="UP000000679">
    <property type="component" value="Segment"/>
</dbReference>
<dbReference type="GO" id="GO:0019029">
    <property type="term" value="C:helical viral capsid"/>
    <property type="evidence" value="ECO:0007669"/>
    <property type="project" value="UniProtKB-KW"/>
</dbReference>
<dbReference type="InterPro" id="IPR008879">
    <property type="entry name" value="Coat_protein_tricho/vitivirus"/>
</dbReference>
<dbReference type="Pfam" id="PF05892">
    <property type="entry name" value="Tricho_coat"/>
    <property type="match status" value="1"/>
</dbReference>
<dbReference type="PIRSF" id="PIRSF004075">
    <property type="entry name" value="Coat_protein_tricho/vitivirus"/>
    <property type="match status" value="1"/>
</dbReference>
<proteinExistence type="predicted"/>
<sequence>MAHYAKRVEIRAIIEELVLAKAQPTDDASESGYDRNMYLNTLFGYIALVGTSKKAIHYGEVDIVGPKASKKTGIDPRGKMVVSELVGRMRTLSVAVSEGPVKGATLRQMCEPFAQNAYDFLVVMAEMGTYSQLATKMTRSGFKEPQVMFDFASGLDLKALTLQEATVIQAMHSRLFRTEGAKGVFNAQSSIGEQAVEI</sequence>
<gene>
    <name type="ORF">ORF4</name>
</gene>
<accession>Q67707</accession>